<feature type="chain" id="PRO_0000339536" description="ATP synthase subunit beta">
    <location>
        <begin position="1"/>
        <end position="488"/>
    </location>
</feature>
<feature type="region of interest" description="Disordered" evidence="2">
    <location>
        <begin position="467"/>
        <end position="488"/>
    </location>
</feature>
<feature type="binding site" evidence="1">
    <location>
        <begin position="155"/>
        <end position="162"/>
    </location>
    <ligand>
        <name>ATP</name>
        <dbReference type="ChEBI" id="CHEBI:30616"/>
    </ligand>
</feature>
<accession>Q03A18</accession>
<protein>
    <recommendedName>
        <fullName evidence="1">ATP synthase subunit beta</fullName>
        <ecNumber evidence="1">7.1.2.2</ecNumber>
    </recommendedName>
    <alternativeName>
        <fullName evidence="1">ATP synthase F1 sector subunit beta</fullName>
    </alternativeName>
    <alternativeName>
        <fullName evidence="1">F-ATPase subunit beta</fullName>
    </alternativeName>
</protein>
<name>ATPB_LACP3</name>
<dbReference type="EC" id="7.1.2.2" evidence="1"/>
<dbReference type="EMBL" id="CP000423">
    <property type="protein sequence ID" value="ABJ69954.1"/>
    <property type="molecule type" value="Genomic_DNA"/>
</dbReference>
<dbReference type="RefSeq" id="WP_003564972.1">
    <property type="nucleotide sequence ID" value="NC_008526.1"/>
</dbReference>
<dbReference type="RefSeq" id="YP_806396.1">
    <property type="nucleotide sequence ID" value="NC_008526.1"/>
</dbReference>
<dbReference type="SMR" id="Q03A18"/>
<dbReference type="STRING" id="321967.LSEI_1166"/>
<dbReference type="PaxDb" id="321967-LSEI_1166"/>
<dbReference type="GeneID" id="57089860"/>
<dbReference type="KEGG" id="lca:LSEI_1166"/>
<dbReference type="PATRIC" id="fig|321967.11.peg.1140"/>
<dbReference type="HOGENOM" id="CLU_022398_0_2_9"/>
<dbReference type="Proteomes" id="UP000001651">
    <property type="component" value="Chromosome"/>
</dbReference>
<dbReference type="GO" id="GO:0005886">
    <property type="term" value="C:plasma membrane"/>
    <property type="evidence" value="ECO:0007669"/>
    <property type="project" value="UniProtKB-SubCell"/>
</dbReference>
<dbReference type="GO" id="GO:0045259">
    <property type="term" value="C:proton-transporting ATP synthase complex"/>
    <property type="evidence" value="ECO:0007669"/>
    <property type="project" value="UniProtKB-KW"/>
</dbReference>
<dbReference type="GO" id="GO:0005524">
    <property type="term" value="F:ATP binding"/>
    <property type="evidence" value="ECO:0007669"/>
    <property type="project" value="UniProtKB-UniRule"/>
</dbReference>
<dbReference type="GO" id="GO:0016887">
    <property type="term" value="F:ATP hydrolysis activity"/>
    <property type="evidence" value="ECO:0007669"/>
    <property type="project" value="InterPro"/>
</dbReference>
<dbReference type="GO" id="GO:0046933">
    <property type="term" value="F:proton-transporting ATP synthase activity, rotational mechanism"/>
    <property type="evidence" value="ECO:0007669"/>
    <property type="project" value="UniProtKB-UniRule"/>
</dbReference>
<dbReference type="CDD" id="cd18110">
    <property type="entry name" value="ATP-synt_F1_beta_C"/>
    <property type="match status" value="1"/>
</dbReference>
<dbReference type="CDD" id="cd18115">
    <property type="entry name" value="ATP-synt_F1_beta_N"/>
    <property type="match status" value="1"/>
</dbReference>
<dbReference type="CDD" id="cd01133">
    <property type="entry name" value="F1-ATPase_beta_CD"/>
    <property type="match status" value="1"/>
</dbReference>
<dbReference type="FunFam" id="1.10.1140.10:FF:000001">
    <property type="entry name" value="ATP synthase subunit beta"/>
    <property type="match status" value="1"/>
</dbReference>
<dbReference type="FunFam" id="2.40.10.170:FF:000005">
    <property type="entry name" value="ATP synthase subunit beta"/>
    <property type="match status" value="1"/>
</dbReference>
<dbReference type="FunFam" id="3.40.50.300:FF:000004">
    <property type="entry name" value="ATP synthase subunit beta"/>
    <property type="match status" value="1"/>
</dbReference>
<dbReference type="Gene3D" id="2.40.10.170">
    <property type="match status" value="1"/>
</dbReference>
<dbReference type="Gene3D" id="1.10.1140.10">
    <property type="entry name" value="Bovine Mitochondrial F1-atpase, Atp Synthase Beta Chain, Chain D, domain 3"/>
    <property type="match status" value="1"/>
</dbReference>
<dbReference type="Gene3D" id="3.40.50.300">
    <property type="entry name" value="P-loop containing nucleotide triphosphate hydrolases"/>
    <property type="match status" value="1"/>
</dbReference>
<dbReference type="HAMAP" id="MF_01347">
    <property type="entry name" value="ATP_synth_beta_bact"/>
    <property type="match status" value="1"/>
</dbReference>
<dbReference type="InterPro" id="IPR003593">
    <property type="entry name" value="AAA+_ATPase"/>
</dbReference>
<dbReference type="InterPro" id="IPR055190">
    <property type="entry name" value="ATP-synt_VA_C"/>
</dbReference>
<dbReference type="InterPro" id="IPR005722">
    <property type="entry name" value="ATP_synth_F1_bsu"/>
</dbReference>
<dbReference type="InterPro" id="IPR020003">
    <property type="entry name" value="ATPase_a/bsu_AS"/>
</dbReference>
<dbReference type="InterPro" id="IPR050053">
    <property type="entry name" value="ATPase_alpha/beta_chains"/>
</dbReference>
<dbReference type="InterPro" id="IPR004100">
    <property type="entry name" value="ATPase_F1/V1/A1_a/bsu_N"/>
</dbReference>
<dbReference type="InterPro" id="IPR036121">
    <property type="entry name" value="ATPase_F1/V1/A1_a/bsu_N_sf"/>
</dbReference>
<dbReference type="InterPro" id="IPR000194">
    <property type="entry name" value="ATPase_F1/V1/A1_a/bsu_nucl-bd"/>
</dbReference>
<dbReference type="InterPro" id="IPR024034">
    <property type="entry name" value="ATPase_F1/V1_b/a_C"/>
</dbReference>
<dbReference type="InterPro" id="IPR027417">
    <property type="entry name" value="P-loop_NTPase"/>
</dbReference>
<dbReference type="NCBIfam" id="TIGR01039">
    <property type="entry name" value="atpD"/>
    <property type="match status" value="1"/>
</dbReference>
<dbReference type="PANTHER" id="PTHR15184">
    <property type="entry name" value="ATP SYNTHASE"/>
    <property type="match status" value="1"/>
</dbReference>
<dbReference type="PANTHER" id="PTHR15184:SF71">
    <property type="entry name" value="ATP SYNTHASE SUBUNIT BETA, MITOCHONDRIAL"/>
    <property type="match status" value="1"/>
</dbReference>
<dbReference type="Pfam" id="PF00006">
    <property type="entry name" value="ATP-synt_ab"/>
    <property type="match status" value="1"/>
</dbReference>
<dbReference type="Pfam" id="PF02874">
    <property type="entry name" value="ATP-synt_ab_N"/>
    <property type="match status" value="1"/>
</dbReference>
<dbReference type="Pfam" id="PF22919">
    <property type="entry name" value="ATP-synt_VA_C"/>
    <property type="match status" value="1"/>
</dbReference>
<dbReference type="SMART" id="SM00382">
    <property type="entry name" value="AAA"/>
    <property type="match status" value="1"/>
</dbReference>
<dbReference type="SUPFAM" id="SSF47917">
    <property type="entry name" value="C-terminal domain of alpha and beta subunits of F1 ATP synthase"/>
    <property type="match status" value="1"/>
</dbReference>
<dbReference type="SUPFAM" id="SSF50615">
    <property type="entry name" value="N-terminal domain of alpha and beta subunits of F1 ATP synthase"/>
    <property type="match status" value="1"/>
</dbReference>
<dbReference type="SUPFAM" id="SSF52540">
    <property type="entry name" value="P-loop containing nucleoside triphosphate hydrolases"/>
    <property type="match status" value="1"/>
</dbReference>
<dbReference type="PROSITE" id="PS00152">
    <property type="entry name" value="ATPASE_ALPHA_BETA"/>
    <property type="match status" value="1"/>
</dbReference>
<gene>
    <name evidence="1" type="primary">atpD</name>
    <name type="ordered locus">LSEI_1166</name>
</gene>
<reference key="1">
    <citation type="journal article" date="2006" name="Proc. Natl. Acad. Sci. U.S.A.">
        <title>Comparative genomics of the lactic acid bacteria.</title>
        <authorList>
            <person name="Makarova K.S."/>
            <person name="Slesarev A."/>
            <person name="Wolf Y.I."/>
            <person name="Sorokin A."/>
            <person name="Mirkin B."/>
            <person name="Koonin E.V."/>
            <person name="Pavlov A."/>
            <person name="Pavlova N."/>
            <person name="Karamychev V."/>
            <person name="Polouchine N."/>
            <person name="Shakhova V."/>
            <person name="Grigoriev I."/>
            <person name="Lou Y."/>
            <person name="Rohksar D."/>
            <person name="Lucas S."/>
            <person name="Huang K."/>
            <person name="Goodstein D.M."/>
            <person name="Hawkins T."/>
            <person name="Plengvidhya V."/>
            <person name="Welker D."/>
            <person name="Hughes J."/>
            <person name="Goh Y."/>
            <person name="Benson A."/>
            <person name="Baldwin K."/>
            <person name="Lee J.-H."/>
            <person name="Diaz-Muniz I."/>
            <person name="Dosti B."/>
            <person name="Smeianov V."/>
            <person name="Wechter W."/>
            <person name="Barabote R."/>
            <person name="Lorca G."/>
            <person name="Altermann E."/>
            <person name="Barrangou R."/>
            <person name="Ganesan B."/>
            <person name="Xie Y."/>
            <person name="Rawsthorne H."/>
            <person name="Tamir D."/>
            <person name="Parker C."/>
            <person name="Breidt F."/>
            <person name="Broadbent J.R."/>
            <person name="Hutkins R."/>
            <person name="O'Sullivan D."/>
            <person name="Steele J."/>
            <person name="Unlu G."/>
            <person name="Saier M.H. Jr."/>
            <person name="Klaenhammer T."/>
            <person name="Richardson P."/>
            <person name="Kozyavkin S."/>
            <person name="Weimer B.C."/>
            <person name="Mills D.A."/>
        </authorList>
    </citation>
    <scope>NUCLEOTIDE SEQUENCE [LARGE SCALE GENOMIC DNA]</scope>
    <source>
        <strain>ATCC 334 / BCRC 17002 / CCUG 31169 / CIP 107868 / KCTC 3260 / NRRL B-441</strain>
    </source>
</reference>
<evidence type="ECO:0000255" key="1">
    <source>
        <dbReference type="HAMAP-Rule" id="MF_01347"/>
    </source>
</evidence>
<evidence type="ECO:0000256" key="2">
    <source>
        <dbReference type="SAM" id="MobiDB-lite"/>
    </source>
</evidence>
<comment type="function">
    <text evidence="1">Produces ATP from ADP in the presence of a proton gradient across the membrane. The catalytic sites are hosted primarily by the beta subunits.</text>
</comment>
<comment type="catalytic activity">
    <reaction evidence="1">
        <text>ATP + H2O + 4 H(+)(in) = ADP + phosphate + 5 H(+)(out)</text>
        <dbReference type="Rhea" id="RHEA:57720"/>
        <dbReference type="ChEBI" id="CHEBI:15377"/>
        <dbReference type="ChEBI" id="CHEBI:15378"/>
        <dbReference type="ChEBI" id="CHEBI:30616"/>
        <dbReference type="ChEBI" id="CHEBI:43474"/>
        <dbReference type="ChEBI" id="CHEBI:456216"/>
        <dbReference type="EC" id="7.1.2.2"/>
    </reaction>
</comment>
<comment type="subunit">
    <text evidence="1">F-type ATPases have 2 components, CF(1) - the catalytic core - and CF(0) - the membrane proton channel. CF(1) has five subunits: alpha(3), beta(3), gamma(1), delta(1), epsilon(1). CF(0) has three main subunits: a(1), b(2) and c(9-12). The alpha and beta chains form an alternating ring which encloses part of the gamma chain. CF(1) is attached to CF(0) by a central stalk formed by the gamma and epsilon chains, while a peripheral stalk is formed by the delta and b chains.</text>
</comment>
<comment type="subcellular location">
    <subcellularLocation>
        <location evidence="1">Cell membrane</location>
        <topology evidence="1">Peripheral membrane protein</topology>
    </subcellularLocation>
</comment>
<comment type="similarity">
    <text evidence="1">Belongs to the ATPase alpha/beta chains family.</text>
</comment>
<keyword id="KW-0066">ATP synthesis</keyword>
<keyword id="KW-0067">ATP-binding</keyword>
<keyword id="KW-1003">Cell membrane</keyword>
<keyword id="KW-0139">CF(1)</keyword>
<keyword id="KW-0375">Hydrogen ion transport</keyword>
<keyword id="KW-0406">Ion transport</keyword>
<keyword id="KW-0472">Membrane</keyword>
<keyword id="KW-0547">Nucleotide-binding</keyword>
<keyword id="KW-1185">Reference proteome</keyword>
<keyword id="KW-1278">Translocase</keyword>
<keyword id="KW-0813">Transport</keyword>
<organism>
    <name type="scientific">Lacticaseibacillus paracasei (strain ATCC 334 / BCRC 17002 / CCUG 31169 / CIP 107868 / KCTC 3260 / NRRL B-441)</name>
    <name type="common">Lactobacillus paracasei</name>
    <dbReference type="NCBI Taxonomy" id="321967"/>
    <lineage>
        <taxon>Bacteria</taxon>
        <taxon>Bacillati</taxon>
        <taxon>Bacillota</taxon>
        <taxon>Bacilli</taxon>
        <taxon>Lactobacillales</taxon>
        <taxon>Lactobacillaceae</taxon>
        <taxon>Lacticaseibacillus</taxon>
    </lineage>
</organism>
<proteinExistence type="inferred from homology"/>
<sequence length="488" mass="52926">MPNSTGKIAQVIGPVVDVAFPINGDLPEINNALTVAKKDGSQLVLEVALELGDGVMRTIAMDSTDGLQRNMAVQDTGGPISVPVGKDTLGRVFNVLGDPIDGGEAFGPDHRRDSIHRDAPKFEDLNTSSEILETGIKVIDLLEPYLRGGKVGLFGGAGVGKTVLIQELIHNIAEEHGGISVFTGVGERTREGNDLYFEMKESGVLENTAMVFGQMNEPPGARMRVALTGLTIAEYFRDVEGQDVLLFIDNIFRFTQAGSEVSALLGRIPSAVGYQPTLATEMGQLQERITSTKKGSVTSIQAIYVPADDYTDPAPATTFAHLDATTNLERRLTEQGIYPAVDPLESSSSALTPEIVGDEHYKVATEVQQVLQRYRELQDIISILGMDELSDEEKVVVARARRIQFFLSQNFNVAERFTGQPGSYVPVEETVKGFKAILDGKYDDYPEDAFRSVGRIEEVVEKAKKMGFAPDDQNTDADEKPAAQAAAN</sequence>